<feature type="chain" id="PRO_0000277899" description="UDP-N-acetylglucosamine 1-carboxyvinyltransferase">
    <location>
        <begin position="1"/>
        <end position="419"/>
    </location>
</feature>
<feature type="active site" description="Proton donor" evidence="1">
    <location>
        <position position="119"/>
    </location>
</feature>
<feature type="binding site" evidence="1">
    <location>
        <begin position="22"/>
        <end position="23"/>
    </location>
    <ligand>
        <name>phosphoenolpyruvate</name>
        <dbReference type="ChEBI" id="CHEBI:58702"/>
    </ligand>
</feature>
<feature type="binding site" evidence="1">
    <location>
        <position position="95"/>
    </location>
    <ligand>
        <name>UDP-N-acetyl-alpha-D-glucosamine</name>
        <dbReference type="ChEBI" id="CHEBI:57705"/>
    </ligand>
</feature>
<feature type="binding site" evidence="1">
    <location>
        <position position="308"/>
    </location>
    <ligand>
        <name>UDP-N-acetyl-alpha-D-glucosamine</name>
        <dbReference type="ChEBI" id="CHEBI:57705"/>
    </ligand>
</feature>
<feature type="binding site" evidence="1">
    <location>
        <position position="330"/>
    </location>
    <ligand>
        <name>UDP-N-acetyl-alpha-D-glucosamine</name>
        <dbReference type="ChEBI" id="CHEBI:57705"/>
    </ligand>
</feature>
<feature type="modified residue" description="2-(S-cysteinyl)pyruvic acid O-phosphothioketal" evidence="1">
    <location>
        <position position="119"/>
    </location>
</feature>
<name>MURA_RICBR</name>
<sequence length="419" mass="45269">MQKLIIHGGKPLKGIINISGAKNAVLPIMAASILTDKLHITNVPKLTDVSTMKELLKSHGAGIEIIEHENEFELVINAANINNLTADYEIVRKMRASIWVLGPLLSRYGKAKVSLPGGCAIGARQVDLHIAVLKAMGAEITIEDGYINASTAGRLKGTHFIFDKISVGATINAVLAAVLADGETLLFNCAREPEIVDLCNCLNKMGADISGIGTSEIRINGKDSLSEASYRVLPDRIEAGTYMFAAAITKGDLKLYGIDYHIIENIALKLIETGIKVMPIDNGVQVTYADKLNAVNLETNPYPGFATDLQAQFMSLMTISQGSSIITENIFENRFMHVPELCRMGADITVRGNQAIVQGVKGLKGAEVMASDLRASVSLILAGLSTDSETVLHRIYHLDRGFQNLEKKLNNCGADIKRV</sequence>
<comment type="function">
    <text evidence="1">Cell wall formation. Adds enolpyruvyl to UDP-N-acetylglucosamine.</text>
</comment>
<comment type="catalytic activity">
    <reaction evidence="1">
        <text>phosphoenolpyruvate + UDP-N-acetyl-alpha-D-glucosamine = UDP-N-acetyl-3-O-(1-carboxyvinyl)-alpha-D-glucosamine + phosphate</text>
        <dbReference type="Rhea" id="RHEA:18681"/>
        <dbReference type="ChEBI" id="CHEBI:43474"/>
        <dbReference type="ChEBI" id="CHEBI:57705"/>
        <dbReference type="ChEBI" id="CHEBI:58702"/>
        <dbReference type="ChEBI" id="CHEBI:68483"/>
        <dbReference type="EC" id="2.5.1.7"/>
    </reaction>
</comment>
<comment type="pathway">
    <text evidence="1">Cell wall biogenesis; peptidoglycan biosynthesis.</text>
</comment>
<comment type="subcellular location">
    <subcellularLocation>
        <location evidence="1">Cytoplasm</location>
    </subcellularLocation>
</comment>
<comment type="similarity">
    <text evidence="1">Belongs to the EPSP synthase family. MurA subfamily.</text>
</comment>
<gene>
    <name evidence="1" type="primary">murA</name>
    <name type="ordered locus">RBE_0994</name>
</gene>
<dbReference type="EC" id="2.5.1.7" evidence="1"/>
<dbReference type="EMBL" id="CP000087">
    <property type="protein sequence ID" value="ABE05075.1"/>
    <property type="molecule type" value="Genomic_DNA"/>
</dbReference>
<dbReference type="RefSeq" id="WP_011477655.1">
    <property type="nucleotide sequence ID" value="NC_007940.1"/>
</dbReference>
<dbReference type="SMR" id="Q1RHT9"/>
<dbReference type="KEGG" id="rbe:RBE_0994"/>
<dbReference type="eggNOG" id="COG0766">
    <property type="taxonomic scope" value="Bacteria"/>
</dbReference>
<dbReference type="HOGENOM" id="CLU_027387_0_0_5"/>
<dbReference type="OrthoDB" id="9803760at2"/>
<dbReference type="UniPathway" id="UPA00219"/>
<dbReference type="Proteomes" id="UP000001951">
    <property type="component" value="Chromosome"/>
</dbReference>
<dbReference type="GO" id="GO:0005737">
    <property type="term" value="C:cytoplasm"/>
    <property type="evidence" value="ECO:0007669"/>
    <property type="project" value="UniProtKB-SubCell"/>
</dbReference>
<dbReference type="GO" id="GO:0008760">
    <property type="term" value="F:UDP-N-acetylglucosamine 1-carboxyvinyltransferase activity"/>
    <property type="evidence" value="ECO:0007669"/>
    <property type="project" value="UniProtKB-UniRule"/>
</dbReference>
<dbReference type="GO" id="GO:0051301">
    <property type="term" value="P:cell division"/>
    <property type="evidence" value="ECO:0007669"/>
    <property type="project" value="UniProtKB-KW"/>
</dbReference>
<dbReference type="GO" id="GO:0071555">
    <property type="term" value="P:cell wall organization"/>
    <property type="evidence" value="ECO:0007669"/>
    <property type="project" value="UniProtKB-KW"/>
</dbReference>
<dbReference type="GO" id="GO:0009252">
    <property type="term" value="P:peptidoglycan biosynthetic process"/>
    <property type="evidence" value="ECO:0007669"/>
    <property type="project" value="UniProtKB-UniRule"/>
</dbReference>
<dbReference type="GO" id="GO:0008360">
    <property type="term" value="P:regulation of cell shape"/>
    <property type="evidence" value="ECO:0007669"/>
    <property type="project" value="UniProtKB-KW"/>
</dbReference>
<dbReference type="GO" id="GO:0019277">
    <property type="term" value="P:UDP-N-acetylgalactosamine biosynthetic process"/>
    <property type="evidence" value="ECO:0007669"/>
    <property type="project" value="InterPro"/>
</dbReference>
<dbReference type="CDD" id="cd01555">
    <property type="entry name" value="UdpNAET"/>
    <property type="match status" value="1"/>
</dbReference>
<dbReference type="FunFam" id="3.65.10.10:FF:000001">
    <property type="entry name" value="UDP-N-acetylglucosamine 1-carboxyvinyltransferase"/>
    <property type="match status" value="1"/>
</dbReference>
<dbReference type="Gene3D" id="3.65.10.10">
    <property type="entry name" value="Enolpyruvate transferase domain"/>
    <property type="match status" value="2"/>
</dbReference>
<dbReference type="HAMAP" id="MF_00111">
    <property type="entry name" value="MurA"/>
    <property type="match status" value="1"/>
</dbReference>
<dbReference type="InterPro" id="IPR001986">
    <property type="entry name" value="Enolpyruvate_Tfrase_dom"/>
</dbReference>
<dbReference type="InterPro" id="IPR036968">
    <property type="entry name" value="Enolpyruvate_Tfrase_sf"/>
</dbReference>
<dbReference type="InterPro" id="IPR050068">
    <property type="entry name" value="MurA_subfamily"/>
</dbReference>
<dbReference type="InterPro" id="IPR013792">
    <property type="entry name" value="RNA3'P_cycl/enolpyr_Trfase_a/b"/>
</dbReference>
<dbReference type="InterPro" id="IPR005750">
    <property type="entry name" value="UDP_GlcNAc_COvinyl_MurA"/>
</dbReference>
<dbReference type="NCBIfam" id="TIGR01072">
    <property type="entry name" value="murA"/>
    <property type="match status" value="1"/>
</dbReference>
<dbReference type="NCBIfam" id="NF006873">
    <property type="entry name" value="PRK09369.1"/>
    <property type="match status" value="1"/>
</dbReference>
<dbReference type="PANTHER" id="PTHR43783">
    <property type="entry name" value="UDP-N-ACETYLGLUCOSAMINE 1-CARBOXYVINYLTRANSFERASE"/>
    <property type="match status" value="1"/>
</dbReference>
<dbReference type="PANTHER" id="PTHR43783:SF1">
    <property type="entry name" value="UDP-N-ACETYLGLUCOSAMINE 1-CARBOXYVINYLTRANSFERASE"/>
    <property type="match status" value="1"/>
</dbReference>
<dbReference type="Pfam" id="PF00275">
    <property type="entry name" value="EPSP_synthase"/>
    <property type="match status" value="1"/>
</dbReference>
<dbReference type="SUPFAM" id="SSF55205">
    <property type="entry name" value="EPT/RTPC-like"/>
    <property type="match status" value="1"/>
</dbReference>
<evidence type="ECO:0000255" key="1">
    <source>
        <dbReference type="HAMAP-Rule" id="MF_00111"/>
    </source>
</evidence>
<proteinExistence type="inferred from homology"/>
<keyword id="KW-0131">Cell cycle</keyword>
<keyword id="KW-0132">Cell division</keyword>
<keyword id="KW-0133">Cell shape</keyword>
<keyword id="KW-0961">Cell wall biogenesis/degradation</keyword>
<keyword id="KW-0963">Cytoplasm</keyword>
<keyword id="KW-0573">Peptidoglycan synthesis</keyword>
<keyword id="KW-0670">Pyruvate</keyword>
<keyword id="KW-0808">Transferase</keyword>
<reference key="1">
    <citation type="journal article" date="2006" name="PLoS Genet.">
        <title>Genome sequence of Rickettsia bellii illuminates the role of amoebae in gene exchanges between intracellular pathogens.</title>
        <authorList>
            <person name="Ogata H."/>
            <person name="La Scola B."/>
            <person name="Audic S."/>
            <person name="Renesto P."/>
            <person name="Blanc G."/>
            <person name="Robert C."/>
            <person name="Fournier P.-E."/>
            <person name="Claverie J.-M."/>
            <person name="Raoult D."/>
        </authorList>
    </citation>
    <scope>NUCLEOTIDE SEQUENCE [LARGE SCALE GENOMIC DNA]</scope>
    <source>
        <strain>RML369-C</strain>
    </source>
</reference>
<accession>Q1RHT9</accession>
<protein>
    <recommendedName>
        <fullName evidence="1">UDP-N-acetylglucosamine 1-carboxyvinyltransferase</fullName>
        <ecNumber evidence="1">2.5.1.7</ecNumber>
    </recommendedName>
    <alternativeName>
        <fullName evidence="1">Enoylpyruvate transferase</fullName>
    </alternativeName>
    <alternativeName>
        <fullName evidence="1">UDP-N-acetylglucosamine enolpyruvyl transferase</fullName>
        <shortName evidence="1">EPT</shortName>
    </alternativeName>
</protein>
<organism>
    <name type="scientific">Rickettsia bellii (strain RML369-C)</name>
    <dbReference type="NCBI Taxonomy" id="336407"/>
    <lineage>
        <taxon>Bacteria</taxon>
        <taxon>Pseudomonadati</taxon>
        <taxon>Pseudomonadota</taxon>
        <taxon>Alphaproteobacteria</taxon>
        <taxon>Rickettsiales</taxon>
        <taxon>Rickettsiaceae</taxon>
        <taxon>Rickettsieae</taxon>
        <taxon>Rickettsia</taxon>
        <taxon>belli group</taxon>
    </lineage>
</organism>